<evidence type="ECO:0000250" key="1"/>
<evidence type="ECO:0000305" key="2"/>
<protein>
    <recommendedName>
        <fullName>P21 prophage-derived terminase small subunit</fullName>
    </recommendedName>
    <alternativeName>
        <fullName>Gp1</fullName>
    </alternativeName>
</protein>
<sequence length="182" mass="20507">MKVNKKRLAEIFNVDPRTIERWQSQGLPCASKGSKGIESVFDTAMAIQWYAQRETDIENEKLRKELDDLRAAAESDLQPGTIDYERYRLTKAQADAQELKNAREDGVVLETELFTFILQRVAQEISGILVRVPLTLQRKYPDISPSHLDVVKTEIAKASNVAAKAGENVGGWIDDFRRAEGS</sequence>
<reference key="1">
    <citation type="journal article" date="2002" name="Proc. Natl. Acad. Sci. U.S.A.">
        <title>Extensive mosaic structure revealed by the complete genome sequence of uropathogenic Escherichia coli.</title>
        <authorList>
            <person name="Welch R.A."/>
            <person name="Burland V."/>
            <person name="Plunkett G. III"/>
            <person name="Redford P."/>
            <person name="Roesch P."/>
            <person name="Rasko D."/>
            <person name="Buckles E.L."/>
            <person name="Liou S.-R."/>
            <person name="Boutin A."/>
            <person name="Hackett J."/>
            <person name="Stroud D."/>
            <person name="Mayhew G.F."/>
            <person name="Rose D.J."/>
            <person name="Zhou S."/>
            <person name="Schwartz D.C."/>
            <person name="Perna N.T."/>
            <person name="Mobley H.L.T."/>
            <person name="Donnenberg M.S."/>
            <person name="Blattner F.R."/>
        </authorList>
    </citation>
    <scope>NUCLEOTIDE SEQUENCE [LARGE SCALE GENOMIC DNA]</scope>
    <source>
        <strain>CFT073 / ATCC 700928 / UPEC</strain>
    </source>
</reference>
<comment type="function">
    <text evidence="1">Involved in the initiation of the phage DNA packaging into the prohead. Processes replicating concatemeric DNA into pieces of unit length with cohesive ends (By similarity).</text>
</comment>
<comment type="subunit">
    <text evidence="1">Heterooligomer of gp1 and gp2.</text>
</comment>
<comment type="similarity">
    <text evidence="2">Belongs to the terminase small subunit family.</text>
</comment>
<organism>
    <name type="scientific">Escherichia coli O6:H1 (strain CFT073 / ATCC 700928 / UPEC)</name>
    <dbReference type="NCBI Taxonomy" id="199310"/>
    <lineage>
        <taxon>Bacteria</taxon>
        <taxon>Pseudomonadati</taxon>
        <taxon>Pseudomonadota</taxon>
        <taxon>Gammaproteobacteria</taxon>
        <taxon>Enterobacterales</taxon>
        <taxon>Enterobacteriaceae</taxon>
        <taxon>Escherichia</taxon>
    </lineage>
</organism>
<accession>P68653</accession>
<accession>P36694</accession>
<name>TERS_ECOL6</name>
<dbReference type="EMBL" id="AE014075">
    <property type="protein sequence ID" value="AAN80037.1"/>
    <property type="molecule type" value="Genomic_DNA"/>
</dbReference>
<dbReference type="RefSeq" id="WP_000867568.1">
    <property type="nucleotide sequence ID" value="NZ_CP051263.1"/>
</dbReference>
<dbReference type="SMR" id="P68653"/>
<dbReference type="STRING" id="199310.c1568"/>
<dbReference type="KEGG" id="ecc:c1568"/>
<dbReference type="eggNOG" id="COG4220">
    <property type="taxonomic scope" value="Bacteria"/>
</dbReference>
<dbReference type="HOGENOM" id="CLU_101608_0_1_6"/>
<dbReference type="BioCyc" id="ECOL199310:C1568-MONOMER"/>
<dbReference type="Proteomes" id="UP000001410">
    <property type="component" value="Chromosome"/>
</dbReference>
<dbReference type="GO" id="GO:0005524">
    <property type="term" value="F:ATP binding"/>
    <property type="evidence" value="ECO:0007669"/>
    <property type="project" value="UniProtKB-KW"/>
</dbReference>
<dbReference type="Gene3D" id="1.10.10.10">
    <property type="entry name" value="Winged helix-like DNA-binding domain superfamily/Winged helix DNA-binding domain"/>
    <property type="match status" value="1"/>
</dbReference>
<dbReference type="InterPro" id="IPR009061">
    <property type="entry name" value="DNA-bd_dom_put_sf"/>
</dbReference>
<dbReference type="InterPro" id="IPR010906">
    <property type="entry name" value="Phage_lambda_Nu1_terminase-ssu"/>
</dbReference>
<dbReference type="InterPro" id="IPR036388">
    <property type="entry name" value="WH-like_DNA-bd_sf"/>
</dbReference>
<dbReference type="Pfam" id="PF07471">
    <property type="entry name" value="Phage_Nu1"/>
    <property type="match status" value="1"/>
</dbReference>
<dbReference type="SUPFAM" id="SSF46955">
    <property type="entry name" value="Putative DNA-binding domain"/>
    <property type="match status" value="1"/>
</dbReference>
<keyword id="KW-0067">ATP-binding</keyword>
<keyword id="KW-0547">Nucleotide-binding</keyword>
<keyword id="KW-1185">Reference proteome</keyword>
<keyword id="KW-0231">Viral genome packaging</keyword>
<keyword id="KW-1188">Viral release from host cell</keyword>
<feature type="chain" id="PRO_0000077677" description="P21 prophage-derived terminase small subunit">
    <location>
        <begin position="1"/>
        <end position="182"/>
    </location>
</feature>
<feature type="binding site" evidence="1">
    <location>
        <begin position="31"/>
        <end position="36"/>
    </location>
    <ligand>
        <name>ATP</name>
        <dbReference type="ChEBI" id="CHEBI:30616"/>
    </ligand>
</feature>
<gene>
    <name type="primary">nohA</name>
    <name type="ordered locus">c1568</name>
</gene>
<proteinExistence type="inferred from homology"/>